<name>UBA4_ASPCL</name>
<gene>
    <name evidence="3" type="primary">uba4</name>
    <name evidence="3" type="synonym">cnxF</name>
    <name type="ORF">ACLA_013510</name>
</gene>
<sequence>MENLEQTCASLRAQIAATEAQLAGLKRDLEVAEQAAAEIKAQDVKSTGIREEGSEKKNPWPLLSEEYKRYGRQMIVPQLGLQGQLKLRSARVLIVGAGGLGCPAALYLAGAGVGTLGLVDGDTVEHSNLHRQVLHRSKNVGKFKVDSAIEYLRELNPHPTYVPYRAHLTPQEAPEIFKDYDIVLDCTDNPATRYLISDTAVLLGKPLVSASALRTEGQLIVLNNPPRPVGDKSGGPCYRCVFPKPPPATSVVSCADGGIIGPVVGTMGVLQAIEAIKVITSSPADETSASPPSLLIFSAYSTPPFRSIKIRSRRANCAVCSAEASVTVETLKTGSTDYVFFCGVAGPETLLRPEERITPLEFKKKHPGQVSHEQELGGSKEPTIIDVREQVQFDICSLDNSINIPISTILSSAASPTTSTPESLPSWLPHDIVSSSSTDPIYVVCRLGNDSQIAVRKMKELGLDQGGKRFICDIQGGLRAWREQIDPDWPEY</sequence>
<dbReference type="EC" id="2.7.7.80" evidence="3"/>
<dbReference type="EC" id="2.8.1.11" evidence="3"/>
<dbReference type="EMBL" id="DS027049">
    <property type="protein sequence ID" value="EAW12915.1"/>
    <property type="molecule type" value="Genomic_DNA"/>
</dbReference>
<dbReference type="RefSeq" id="XP_001274341.1">
    <property type="nucleotide sequence ID" value="XM_001274340.1"/>
</dbReference>
<dbReference type="SMR" id="A1CAZ7"/>
<dbReference type="STRING" id="344612.A1CAZ7"/>
<dbReference type="EnsemblFungi" id="EAW12915">
    <property type="protein sequence ID" value="EAW12915"/>
    <property type="gene ID" value="ACLA_013510"/>
</dbReference>
<dbReference type="GeneID" id="4706249"/>
<dbReference type="KEGG" id="act:ACLA_013510"/>
<dbReference type="VEuPathDB" id="FungiDB:ACLA_013510"/>
<dbReference type="eggNOG" id="KOG2017">
    <property type="taxonomic scope" value="Eukaryota"/>
</dbReference>
<dbReference type="HOGENOM" id="CLU_013325_1_2_1"/>
<dbReference type="OMA" id="IPDVGMD"/>
<dbReference type="OrthoDB" id="10261062at2759"/>
<dbReference type="UniPathway" id="UPA00344"/>
<dbReference type="UniPathway" id="UPA00988"/>
<dbReference type="Proteomes" id="UP000006701">
    <property type="component" value="Unassembled WGS sequence"/>
</dbReference>
<dbReference type="GO" id="GO:0005829">
    <property type="term" value="C:cytosol"/>
    <property type="evidence" value="ECO:0007669"/>
    <property type="project" value="InterPro"/>
</dbReference>
<dbReference type="GO" id="GO:0070733">
    <property type="term" value="F:AMPylase activity"/>
    <property type="evidence" value="ECO:0007669"/>
    <property type="project" value="EnsemblFungi"/>
</dbReference>
<dbReference type="GO" id="GO:0005524">
    <property type="term" value="F:ATP binding"/>
    <property type="evidence" value="ECO:0007669"/>
    <property type="project" value="UniProtKB-KW"/>
</dbReference>
<dbReference type="GO" id="GO:0042802">
    <property type="term" value="F:identical protein binding"/>
    <property type="evidence" value="ECO:0007669"/>
    <property type="project" value="EnsemblFungi"/>
</dbReference>
<dbReference type="GO" id="GO:0046872">
    <property type="term" value="F:metal ion binding"/>
    <property type="evidence" value="ECO:0007669"/>
    <property type="project" value="UniProtKB-KW"/>
</dbReference>
<dbReference type="GO" id="GO:0061605">
    <property type="term" value="F:molybdopterin-synthase adenylyltransferase activity"/>
    <property type="evidence" value="ECO:0007669"/>
    <property type="project" value="UniProtKB-EC"/>
</dbReference>
<dbReference type="GO" id="GO:0061604">
    <property type="term" value="F:molybdopterin-synthase sulfurtransferase activity"/>
    <property type="evidence" value="ECO:0007669"/>
    <property type="project" value="UniProtKB-EC"/>
</dbReference>
<dbReference type="GO" id="GO:0004792">
    <property type="term" value="F:thiosulfate-cyanide sulfurtransferase activity"/>
    <property type="evidence" value="ECO:0007669"/>
    <property type="project" value="EnsemblFungi"/>
</dbReference>
<dbReference type="GO" id="GO:0042292">
    <property type="term" value="F:URM1 activating enzyme activity"/>
    <property type="evidence" value="ECO:0007669"/>
    <property type="project" value="EnsemblFungi"/>
</dbReference>
<dbReference type="GO" id="GO:0007114">
    <property type="term" value="P:cell budding"/>
    <property type="evidence" value="ECO:0007669"/>
    <property type="project" value="EnsemblFungi"/>
</dbReference>
<dbReference type="GO" id="GO:0034599">
    <property type="term" value="P:cellular response to oxidative stress"/>
    <property type="evidence" value="ECO:0007669"/>
    <property type="project" value="EnsemblFungi"/>
</dbReference>
<dbReference type="GO" id="GO:0001403">
    <property type="term" value="P:invasive growth in response to glucose limitation"/>
    <property type="evidence" value="ECO:0007669"/>
    <property type="project" value="EnsemblFungi"/>
</dbReference>
<dbReference type="GO" id="GO:0006777">
    <property type="term" value="P:Mo-molybdopterin cofactor biosynthetic process"/>
    <property type="evidence" value="ECO:0007669"/>
    <property type="project" value="UniProtKB-UniRule"/>
</dbReference>
<dbReference type="GO" id="GO:0032447">
    <property type="term" value="P:protein urmylation"/>
    <property type="evidence" value="ECO:0007669"/>
    <property type="project" value="EnsemblFungi"/>
</dbReference>
<dbReference type="GO" id="GO:2000220">
    <property type="term" value="P:regulation of pseudohyphal growth"/>
    <property type="evidence" value="ECO:0007669"/>
    <property type="project" value="EnsemblFungi"/>
</dbReference>
<dbReference type="GO" id="GO:0002143">
    <property type="term" value="P:tRNA wobble position uridine thiolation"/>
    <property type="evidence" value="ECO:0007669"/>
    <property type="project" value="EnsemblFungi"/>
</dbReference>
<dbReference type="CDD" id="cd00757">
    <property type="entry name" value="ThiF_MoeB_HesA_family"/>
    <property type="match status" value="1"/>
</dbReference>
<dbReference type="FunFam" id="3.40.50.720:FF:000033">
    <property type="entry name" value="Adenylyltransferase and sulfurtransferase MOCS3"/>
    <property type="match status" value="1"/>
</dbReference>
<dbReference type="FunFam" id="3.40.250.10:FF:000096">
    <property type="entry name" value="Adenylyltransferase and sulfurtransferase uba4"/>
    <property type="match status" value="1"/>
</dbReference>
<dbReference type="Gene3D" id="3.40.50.720">
    <property type="entry name" value="NAD(P)-binding Rossmann-like Domain"/>
    <property type="match status" value="1"/>
</dbReference>
<dbReference type="Gene3D" id="3.40.250.10">
    <property type="entry name" value="Rhodanese-like domain"/>
    <property type="match status" value="1"/>
</dbReference>
<dbReference type="HAMAP" id="MF_03049">
    <property type="entry name" value="MOCS3_Uba4"/>
    <property type="match status" value="1"/>
</dbReference>
<dbReference type="InterPro" id="IPR028885">
    <property type="entry name" value="MOCS3/Uba4"/>
</dbReference>
<dbReference type="InterPro" id="IPR001763">
    <property type="entry name" value="Rhodanese-like_dom"/>
</dbReference>
<dbReference type="InterPro" id="IPR036873">
    <property type="entry name" value="Rhodanese-like_dom_sf"/>
</dbReference>
<dbReference type="InterPro" id="IPR045886">
    <property type="entry name" value="ThiF/MoeB/HesA"/>
</dbReference>
<dbReference type="InterPro" id="IPR000594">
    <property type="entry name" value="ThiF_NAD_FAD-bd"/>
</dbReference>
<dbReference type="InterPro" id="IPR035985">
    <property type="entry name" value="Ubiquitin-activating_enz"/>
</dbReference>
<dbReference type="PANTHER" id="PTHR10953:SF102">
    <property type="entry name" value="ADENYLYLTRANSFERASE AND SULFURTRANSFERASE MOCS3"/>
    <property type="match status" value="1"/>
</dbReference>
<dbReference type="PANTHER" id="PTHR10953">
    <property type="entry name" value="UBIQUITIN-ACTIVATING ENZYME E1"/>
    <property type="match status" value="1"/>
</dbReference>
<dbReference type="Pfam" id="PF00581">
    <property type="entry name" value="Rhodanese"/>
    <property type="match status" value="1"/>
</dbReference>
<dbReference type="Pfam" id="PF00899">
    <property type="entry name" value="ThiF"/>
    <property type="match status" value="1"/>
</dbReference>
<dbReference type="SMART" id="SM00450">
    <property type="entry name" value="RHOD"/>
    <property type="match status" value="1"/>
</dbReference>
<dbReference type="SUPFAM" id="SSF69572">
    <property type="entry name" value="Activating enzymes of the ubiquitin-like proteins"/>
    <property type="match status" value="1"/>
</dbReference>
<dbReference type="PROSITE" id="PS50206">
    <property type="entry name" value="RHODANESE_3"/>
    <property type="match status" value="1"/>
</dbReference>
<feature type="chain" id="PRO_0000369217" description="Adenylyltransferase and sulfurtransferase uba4">
    <location>
        <begin position="1"/>
        <end position="492"/>
    </location>
</feature>
<feature type="domain" description="Rhodanese" evidence="3">
    <location>
        <begin position="378"/>
        <end position="490"/>
    </location>
</feature>
<feature type="active site" description="Glycyl thioester intermediate; for adenylyltransferase activity" evidence="3">
    <location>
        <position position="254"/>
    </location>
</feature>
<feature type="active site" description="Cysteine persulfide intermediate; for sulfurtransferase activity" evidence="3">
    <location>
        <position position="445"/>
    </location>
</feature>
<feature type="binding site" evidence="3">
    <location>
        <position position="99"/>
    </location>
    <ligand>
        <name>ATP</name>
        <dbReference type="ChEBI" id="CHEBI:30616"/>
    </ligand>
</feature>
<feature type="binding site" evidence="3">
    <location>
        <position position="120"/>
    </location>
    <ligand>
        <name>ATP</name>
        <dbReference type="ChEBI" id="CHEBI:30616"/>
    </ligand>
</feature>
<feature type="binding site" evidence="3">
    <location>
        <begin position="127"/>
        <end position="131"/>
    </location>
    <ligand>
        <name>ATP</name>
        <dbReference type="ChEBI" id="CHEBI:30616"/>
    </ligand>
</feature>
<feature type="binding site" evidence="3">
    <location>
        <position position="144"/>
    </location>
    <ligand>
        <name>ATP</name>
        <dbReference type="ChEBI" id="CHEBI:30616"/>
    </ligand>
</feature>
<feature type="binding site" evidence="3">
    <location>
        <begin position="188"/>
        <end position="189"/>
    </location>
    <ligand>
        <name>ATP</name>
        <dbReference type="ChEBI" id="CHEBI:30616"/>
    </ligand>
</feature>
<feature type="binding site" evidence="3">
    <location>
        <position position="237"/>
    </location>
    <ligand>
        <name>Zn(2+)</name>
        <dbReference type="ChEBI" id="CHEBI:29105"/>
    </ligand>
</feature>
<feature type="binding site" evidence="3">
    <location>
        <position position="240"/>
    </location>
    <ligand>
        <name>Zn(2+)</name>
        <dbReference type="ChEBI" id="CHEBI:29105"/>
    </ligand>
</feature>
<feature type="binding site" evidence="3">
    <location>
        <position position="317"/>
    </location>
    <ligand>
        <name>Zn(2+)</name>
        <dbReference type="ChEBI" id="CHEBI:29105"/>
    </ligand>
</feature>
<feature type="binding site" evidence="3">
    <location>
        <position position="320"/>
    </location>
    <ligand>
        <name>Zn(2+)</name>
        <dbReference type="ChEBI" id="CHEBI:29105"/>
    </ligand>
</feature>
<accession>A1CAZ7</accession>
<protein>
    <recommendedName>
        <fullName evidence="3">Adenylyltransferase and sulfurtransferase uba4</fullName>
    </recommendedName>
    <alternativeName>
        <fullName evidence="3">Common component for nitrate reductase and xanthine dehydrogenase protein F</fullName>
    </alternativeName>
    <alternativeName>
        <fullName evidence="3">Ubiquitin-like protein activator 4</fullName>
    </alternativeName>
    <domain>
        <recommendedName>
            <fullName evidence="3">Molybdopterin-synthase adenylyltransferase</fullName>
            <ecNumber evidence="3">2.7.7.80</ecNumber>
        </recommendedName>
        <alternativeName>
            <fullName evidence="3">Adenylyltransferase uba4</fullName>
        </alternativeName>
        <alternativeName>
            <fullName evidence="3">Sulfur carrier protein MOCS2A adenylyltransferase</fullName>
        </alternativeName>
    </domain>
    <domain>
        <recommendedName>
            <fullName evidence="3">Molybdopterin-synthase sulfurtransferase</fullName>
            <ecNumber evidence="3">2.8.1.11</ecNumber>
        </recommendedName>
        <alternativeName>
            <fullName evidence="3">Sulfur carrier protein MOCS2A sulfurtransferase</fullName>
        </alternativeName>
        <alternativeName>
            <fullName evidence="3">Sulfurtransferase uba4</fullName>
        </alternativeName>
    </domain>
</protein>
<reference key="1">
    <citation type="journal article" date="2008" name="PLoS Genet.">
        <title>Genomic islands in the pathogenic filamentous fungus Aspergillus fumigatus.</title>
        <authorList>
            <person name="Fedorova N.D."/>
            <person name="Khaldi N."/>
            <person name="Joardar V.S."/>
            <person name="Maiti R."/>
            <person name="Amedeo P."/>
            <person name="Anderson M.J."/>
            <person name="Crabtree J."/>
            <person name="Silva J.C."/>
            <person name="Badger J.H."/>
            <person name="Albarraq A."/>
            <person name="Angiuoli S."/>
            <person name="Bussey H."/>
            <person name="Bowyer P."/>
            <person name="Cotty P.J."/>
            <person name="Dyer P.S."/>
            <person name="Egan A."/>
            <person name="Galens K."/>
            <person name="Fraser-Liggett C.M."/>
            <person name="Haas B.J."/>
            <person name="Inman J.M."/>
            <person name="Kent R."/>
            <person name="Lemieux S."/>
            <person name="Malavazi I."/>
            <person name="Orvis J."/>
            <person name="Roemer T."/>
            <person name="Ronning C.M."/>
            <person name="Sundaram J.P."/>
            <person name="Sutton G."/>
            <person name="Turner G."/>
            <person name="Venter J.C."/>
            <person name="White O.R."/>
            <person name="Whitty B.R."/>
            <person name="Youngman P."/>
            <person name="Wolfe K.H."/>
            <person name="Goldman G.H."/>
            <person name="Wortman J.R."/>
            <person name="Jiang B."/>
            <person name="Denning D.W."/>
            <person name="Nierman W.C."/>
        </authorList>
    </citation>
    <scope>NUCLEOTIDE SEQUENCE [LARGE SCALE GENOMIC DNA]</scope>
    <source>
        <strain>ATCC 1007 / CBS 513.65 / DSM 816 / NCTC 3887 / NRRL 1 / QM 1276 / 107</strain>
    </source>
</reference>
<organism>
    <name type="scientific">Aspergillus clavatus (strain ATCC 1007 / CBS 513.65 / DSM 816 / NCTC 3887 / NRRL 1 / QM 1276 / 107)</name>
    <dbReference type="NCBI Taxonomy" id="344612"/>
    <lineage>
        <taxon>Eukaryota</taxon>
        <taxon>Fungi</taxon>
        <taxon>Dikarya</taxon>
        <taxon>Ascomycota</taxon>
        <taxon>Pezizomycotina</taxon>
        <taxon>Eurotiomycetes</taxon>
        <taxon>Eurotiomycetidae</taxon>
        <taxon>Eurotiales</taxon>
        <taxon>Aspergillaceae</taxon>
        <taxon>Aspergillus</taxon>
        <taxon>Aspergillus subgen. Fumigati</taxon>
    </lineage>
</organism>
<proteinExistence type="inferred from homology"/>
<comment type="function">
    <text evidence="1">Plays a central role in 2-thiolation of mcm(5)S(2)U at tRNA wobble positions of cytosolic tRNA(Lys), tRNA(Glu) and tRNA(Gln). Also essential during biosynthesis of the molybdenum cofactor. Acts by mediating the C-terminal thiocarboxylation of sulfur carriers urm1 and mocs2a. Its N-terminus first activates urm1 and mocs2a as acyl-adenylates (-COAMP), then the persulfide sulfur on the catalytic cysteine is transferred to urm1 and mocs2a to form thiocarboxylation (-COSH) of their C-terminus. The reaction probably involves hydrogen sulfide that is generated from the persulfide intermediate and that acts as a nucleophile towards urm1 and mocs2a. Subsequently, a transient disulfide bond is formed. Does not use thiosulfate as sulfur donor; nfs1 probably acting as a sulfur donor for thiocarboxylation reactions (By similarity).</text>
</comment>
<comment type="catalytic activity">
    <reaction evidence="3">
        <text>[molybdopterin-synthase sulfur-carrier protein]-C-terminal Gly-Gly + ATP + H(+) = [molybdopterin-synthase sulfur-carrier protein]-C-terminal Gly-Gly-AMP + diphosphate</text>
        <dbReference type="Rhea" id="RHEA:43616"/>
        <dbReference type="Rhea" id="RHEA-COMP:12159"/>
        <dbReference type="Rhea" id="RHEA-COMP:12202"/>
        <dbReference type="ChEBI" id="CHEBI:15378"/>
        <dbReference type="ChEBI" id="CHEBI:30616"/>
        <dbReference type="ChEBI" id="CHEBI:33019"/>
        <dbReference type="ChEBI" id="CHEBI:90618"/>
        <dbReference type="ChEBI" id="CHEBI:90778"/>
        <dbReference type="EC" id="2.7.7.80"/>
    </reaction>
</comment>
<comment type="catalytic activity">
    <reaction evidence="3">
        <text>[molybdopterin-synthase sulfur-carrier protein]-C-terminal Gly-Gly-AMP + S-sulfanyl-L-cysteinyl-[cysteine desulfurase] + AH2 = [molybdopterin-synthase sulfur-carrier protein]-C-terminal-Gly-aminoethanethioate + L-cysteinyl-[cysteine desulfurase] + A + AMP + 2 H(+)</text>
        <dbReference type="Rhea" id="RHEA:48612"/>
        <dbReference type="Rhea" id="RHEA-COMP:12157"/>
        <dbReference type="Rhea" id="RHEA-COMP:12158"/>
        <dbReference type="Rhea" id="RHEA-COMP:12159"/>
        <dbReference type="Rhea" id="RHEA-COMP:19907"/>
        <dbReference type="ChEBI" id="CHEBI:13193"/>
        <dbReference type="ChEBI" id="CHEBI:15378"/>
        <dbReference type="ChEBI" id="CHEBI:17499"/>
        <dbReference type="ChEBI" id="CHEBI:29950"/>
        <dbReference type="ChEBI" id="CHEBI:61963"/>
        <dbReference type="ChEBI" id="CHEBI:90618"/>
        <dbReference type="ChEBI" id="CHEBI:232372"/>
        <dbReference type="ChEBI" id="CHEBI:456215"/>
        <dbReference type="EC" id="2.8.1.11"/>
    </reaction>
</comment>
<comment type="cofactor">
    <cofactor evidence="3">
        <name>Zn(2+)</name>
        <dbReference type="ChEBI" id="CHEBI:29105"/>
    </cofactor>
    <text evidence="3">Binds 1 zinc ion per subunit.</text>
</comment>
<comment type="pathway">
    <text evidence="3">tRNA modification; 5-methoxycarbonylmethyl-2-thiouridine-tRNA biosynthesis.</text>
</comment>
<comment type="pathway">
    <text evidence="3">Cofactor biosynthesis; molybdopterin biosynthesis.</text>
</comment>
<comment type="subcellular location">
    <subcellularLocation>
        <location evidence="2">Cytoplasm</location>
        <location evidence="2">Cytosol</location>
    </subcellularLocation>
</comment>
<comment type="similarity">
    <text evidence="3">In the N-terminal section; belongs to the HesA/MoeB/ThiF family. UBA4 subfamily.</text>
</comment>
<keyword id="KW-0067">ATP-binding</keyword>
<keyword id="KW-0963">Cytoplasm</keyword>
<keyword id="KW-0479">Metal-binding</keyword>
<keyword id="KW-0501">Molybdenum cofactor biosynthesis</keyword>
<keyword id="KW-0511">Multifunctional enzyme</keyword>
<keyword id="KW-0547">Nucleotide-binding</keyword>
<keyword id="KW-0548">Nucleotidyltransferase</keyword>
<keyword id="KW-1185">Reference proteome</keyword>
<keyword id="KW-0808">Transferase</keyword>
<keyword id="KW-0819">tRNA processing</keyword>
<keyword id="KW-0833">Ubl conjugation pathway</keyword>
<keyword id="KW-0862">Zinc</keyword>
<evidence type="ECO:0000250" key="1"/>
<evidence type="ECO:0000250" key="2">
    <source>
        <dbReference type="UniProtKB" id="P38820"/>
    </source>
</evidence>
<evidence type="ECO:0000255" key="3">
    <source>
        <dbReference type="HAMAP-Rule" id="MF_03049"/>
    </source>
</evidence>